<proteinExistence type="inferred from homology"/>
<protein>
    <recommendedName>
        <fullName>Histidine biosynthesis bifunctional protein HisIE</fullName>
    </recommendedName>
    <domain>
        <recommendedName>
            <fullName>Phosphoribosyl-AMP cyclohydrolase</fullName>
            <shortName>PRA-CH</shortName>
            <ecNumber>3.5.4.19</ecNumber>
        </recommendedName>
    </domain>
    <domain>
        <recommendedName>
            <fullName>Phosphoribosyl-ATP pyrophosphatase</fullName>
            <shortName>PRA-PH</shortName>
            <ecNumber>3.6.1.31</ecNumber>
        </recommendedName>
    </domain>
</protein>
<accession>O34912</accession>
<keyword id="KW-0028">Amino-acid biosynthesis</keyword>
<keyword id="KW-0067">ATP-binding</keyword>
<keyword id="KW-0963">Cytoplasm</keyword>
<keyword id="KW-0368">Histidine biosynthesis</keyword>
<keyword id="KW-0378">Hydrolase</keyword>
<keyword id="KW-0511">Multifunctional enzyme</keyword>
<keyword id="KW-0547">Nucleotide-binding</keyword>
<keyword id="KW-1185">Reference proteome</keyword>
<name>HIS2_BACSU</name>
<comment type="catalytic activity">
    <reaction>
        <text>1-(5-phospho-beta-D-ribosyl)-ATP + H2O = 1-(5-phospho-beta-D-ribosyl)-5'-AMP + diphosphate + H(+)</text>
        <dbReference type="Rhea" id="RHEA:22828"/>
        <dbReference type="ChEBI" id="CHEBI:15377"/>
        <dbReference type="ChEBI" id="CHEBI:15378"/>
        <dbReference type="ChEBI" id="CHEBI:33019"/>
        <dbReference type="ChEBI" id="CHEBI:59457"/>
        <dbReference type="ChEBI" id="CHEBI:73183"/>
        <dbReference type="EC" id="3.6.1.31"/>
    </reaction>
</comment>
<comment type="catalytic activity">
    <reaction>
        <text>1-(5-phospho-beta-D-ribosyl)-5'-AMP + H2O = 1-(5-phospho-beta-D-ribosyl)-5-[(5-phospho-beta-D-ribosylamino)methylideneamino]imidazole-4-carboxamide</text>
        <dbReference type="Rhea" id="RHEA:20049"/>
        <dbReference type="ChEBI" id="CHEBI:15377"/>
        <dbReference type="ChEBI" id="CHEBI:58435"/>
        <dbReference type="ChEBI" id="CHEBI:59457"/>
        <dbReference type="EC" id="3.5.4.19"/>
    </reaction>
</comment>
<comment type="pathway">
    <text>Amino-acid biosynthesis; L-histidine biosynthesis; L-histidine from 5-phospho-alpha-D-ribose 1-diphosphate: step 2/9.</text>
</comment>
<comment type="pathway">
    <text>Amino-acid biosynthesis; L-histidine biosynthesis; L-histidine from 5-phospho-alpha-D-ribose 1-diphosphate: step 3/9.</text>
</comment>
<comment type="subcellular location">
    <subcellularLocation>
        <location evidence="1">Cytoplasm</location>
    </subcellularLocation>
</comment>
<comment type="similarity">
    <text evidence="2">In the N-terminal section; belongs to the PRA-CH family.</text>
</comment>
<comment type="similarity">
    <text evidence="2">In the C-terminal section; belongs to the PRA-PH family.</text>
</comment>
<reference key="1">
    <citation type="submission" date="1997-08" db="EMBL/GenBank/DDBJ databases">
        <title>Nucleotide sequence of the 300-304 chromosomal segment of Bacillus subtilis.</title>
        <authorList>
            <person name="Lazarevic V."/>
            <person name="Soldo B."/>
            <person name="Rivolta C."/>
            <person name="Reynolds S."/>
            <person name="Mauel C."/>
            <person name="Karamata D."/>
        </authorList>
    </citation>
    <scope>NUCLEOTIDE SEQUENCE [GENOMIC DNA]</scope>
</reference>
<reference key="2">
    <citation type="journal article" date="1997" name="Nature">
        <title>The complete genome sequence of the Gram-positive bacterium Bacillus subtilis.</title>
        <authorList>
            <person name="Kunst F."/>
            <person name="Ogasawara N."/>
            <person name="Moszer I."/>
            <person name="Albertini A.M."/>
            <person name="Alloni G."/>
            <person name="Azevedo V."/>
            <person name="Bertero M.G."/>
            <person name="Bessieres P."/>
            <person name="Bolotin A."/>
            <person name="Borchert S."/>
            <person name="Borriss R."/>
            <person name="Boursier L."/>
            <person name="Brans A."/>
            <person name="Braun M."/>
            <person name="Brignell S.C."/>
            <person name="Bron S."/>
            <person name="Brouillet S."/>
            <person name="Bruschi C.V."/>
            <person name="Caldwell B."/>
            <person name="Capuano V."/>
            <person name="Carter N.M."/>
            <person name="Choi S.-K."/>
            <person name="Codani J.-J."/>
            <person name="Connerton I.F."/>
            <person name="Cummings N.J."/>
            <person name="Daniel R.A."/>
            <person name="Denizot F."/>
            <person name="Devine K.M."/>
            <person name="Duesterhoeft A."/>
            <person name="Ehrlich S.D."/>
            <person name="Emmerson P.T."/>
            <person name="Entian K.-D."/>
            <person name="Errington J."/>
            <person name="Fabret C."/>
            <person name="Ferrari E."/>
            <person name="Foulger D."/>
            <person name="Fritz C."/>
            <person name="Fujita M."/>
            <person name="Fujita Y."/>
            <person name="Fuma S."/>
            <person name="Galizzi A."/>
            <person name="Galleron N."/>
            <person name="Ghim S.-Y."/>
            <person name="Glaser P."/>
            <person name="Goffeau A."/>
            <person name="Golightly E.J."/>
            <person name="Grandi G."/>
            <person name="Guiseppi G."/>
            <person name="Guy B.J."/>
            <person name="Haga K."/>
            <person name="Haiech J."/>
            <person name="Harwood C.R."/>
            <person name="Henaut A."/>
            <person name="Hilbert H."/>
            <person name="Holsappel S."/>
            <person name="Hosono S."/>
            <person name="Hullo M.-F."/>
            <person name="Itaya M."/>
            <person name="Jones L.-M."/>
            <person name="Joris B."/>
            <person name="Karamata D."/>
            <person name="Kasahara Y."/>
            <person name="Klaerr-Blanchard M."/>
            <person name="Klein C."/>
            <person name="Kobayashi Y."/>
            <person name="Koetter P."/>
            <person name="Koningstein G."/>
            <person name="Krogh S."/>
            <person name="Kumano M."/>
            <person name="Kurita K."/>
            <person name="Lapidus A."/>
            <person name="Lardinois S."/>
            <person name="Lauber J."/>
            <person name="Lazarevic V."/>
            <person name="Lee S.-M."/>
            <person name="Levine A."/>
            <person name="Liu H."/>
            <person name="Masuda S."/>
            <person name="Mauel C."/>
            <person name="Medigue C."/>
            <person name="Medina N."/>
            <person name="Mellado R.P."/>
            <person name="Mizuno M."/>
            <person name="Moestl D."/>
            <person name="Nakai S."/>
            <person name="Noback M."/>
            <person name="Noone D."/>
            <person name="O'Reilly M."/>
            <person name="Ogawa K."/>
            <person name="Ogiwara A."/>
            <person name="Oudega B."/>
            <person name="Park S.-H."/>
            <person name="Parro V."/>
            <person name="Pohl T.M."/>
            <person name="Portetelle D."/>
            <person name="Porwollik S."/>
            <person name="Prescott A.M."/>
            <person name="Presecan E."/>
            <person name="Pujic P."/>
            <person name="Purnelle B."/>
            <person name="Rapoport G."/>
            <person name="Rey M."/>
            <person name="Reynolds S."/>
            <person name="Rieger M."/>
            <person name="Rivolta C."/>
            <person name="Rocha E."/>
            <person name="Roche B."/>
            <person name="Rose M."/>
            <person name="Sadaie Y."/>
            <person name="Sato T."/>
            <person name="Scanlan E."/>
            <person name="Schleich S."/>
            <person name="Schroeter R."/>
            <person name="Scoffone F."/>
            <person name="Sekiguchi J."/>
            <person name="Sekowska A."/>
            <person name="Seror S.J."/>
            <person name="Serror P."/>
            <person name="Shin B.-S."/>
            <person name="Soldo B."/>
            <person name="Sorokin A."/>
            <person name="Tacconi E."/>
            <person name="Takagi T."/>
            <person name="Takahashi H."/>
            <person name="Takemaru K."/>
            <person name="Takeuchi M."/>
            <person name="Tamakoshi A."/>
            <person name="Tanaka T."/>
            <person name="Terpstra P."/>
            <person name="Tognoni A."/>
            <person name="Tosato V."/>
            <person name="Uchiyama S."/>
            <person name="Vandenbol M."/>
            <person name="Vannier F."/>
            <person name="Vassarotti A."/>
            <person name="Viari A."/>
            <person name="Wambutt R."/>
            <person name="Wedler E."/>
            <person name="Wedler H."/>
            <person name="Weitzenegger T."/>
            <person name="Winters P."/>
            <person name="Wipat A."/>
            <person name="Yamamoto H."/>
            <person name="Yamane K."/>
            <person name="Yasumoto K."/>
            <person name="Yata K."/>
            <person name="Yoshida K."/>
            <person name="Yoshikawa H.-F."/>
            <person name="Zumstein E."/>
            <person name="Yoshikawa H."/>
            <person name="Danchin A."/>
        </authorList>
    </citation>
    <scope>NUCLEOTIDE SEQUENCE [LARGE SCALE GENOMIC DNA]</scope>
    <source>
        <strain>168</strain>
    </source>
</reference>
<evidence type="ECO:0000250" key="1"/>
<evidence type="ECO:0000305" key="2"/>
<gene>
    <name type="primary">hisI</name>
    <name type="synonym">hisIE</name>
    <name type="ordered locus">BSU34860</name>
</gene>
<feature type="chain" id="PRO_0000136403" description="Histidine biosynthesis bifunctional protein HisIE">
    <location>
        <begin position="1"/>
        <end position="209"/>
    </location>
</feature>
<feature type="region of interest" description="Phosphoribosyl-AMP cyclohydrolase">
    <location>
        <begin position="1"/>
        <end position="116"/>
    </location>
</feature>
<feature type="region of interest" description="Phosphoribosyl-ATP pyrophosphohydrolase">
    <location>
        <begin position="117"/>
        <end position="209"/>
    </location>
</feature>
<dbReference type="EC" id="3.5.4.19"/>
<dbReference type="EC" id="3.6.1.31"/>
<dbReference type="EMBL" id="AF017113">
    <property type="protein sequence ID" value="AAC67300.1"/>
    <property type="molecule type" value="Genomic_DNA"/>
</dbReference>
<dbReference type="EMBL" id="AL009126">
    <property type="protein sequence ID" value="CAB15491.1"/>
    <property type="molecule type" value="Genomic_DNA"/>
</dbReference>
<dbReference type="PIR" id="E69641">
    <property type="entry name" value="E69641"/>
</dbReference>
<dbReference type="RefSeq" id="NP_391366.1">
    <property type="nucleotide sequence ID" value="NC_000964.3"/>
</dbReference>
<dbReference type="RefSeq" id="WP_003243045.1">
    <property type="nucleotide sequence ID" value="NZ_OZ025638.1"/>
</dbReference>
<dbReference type="SMR" id="O34912"/>
<dbReference type="FunCoup" id="O34912">
    <property type="interactions" value="240"/>
</dbReference>
<dbReference type="STRING" id="224308.BSU34860"/>
<dbReference type="PaxDb" id="224308-BSU34860"/>
<dbReference type="DNASU" id="936552"/>
<dbReference type="EnsemblBacteria" id="CAB15491">
    <property type="protein sequence ID" value="CAB15491"/>
    <property type="gene ID" value="BSU_34860"/>
</dbReference>
<dbReference type="GeneID" id="936552"/>
<dbReference type="KEGG" id="bsu:BSU34860"/>
<dbReference type="PATRIC" id="fig|224308.179.peg.3774"/>
<dbReference type="eggNOG" id="COG0139">
    <property type="taxonomic scope" value="Bacteria"/>
</dbReference>
<dbReference type="eggNOG" id="COG0140">
    <property type="taxonomic scope" value="Bacteria"/>
</dbReference>
<dbReference type="InParanoid" id="O34912"/>
<dbReference type="OrthoDB" id="9795769at2"/>
<dbReference type="PhylomeDB" id="O34912"/>
<dbReference type="BioCyc" id="BSUB:BSU34860-MONOMER"/>
<dbReference type="UniPathway" id="UPA00031">
    <property type="reaction ID" value="UER00007"/>
</dbReference>
<dbReference type="UniPathway" id="UPA00031">
    <property type="reaction ID" value="UER00008"/>
</dbReference>
<dbReference type="Proteomes" id="UP000001570">
    <property type="component" value="Chromosome"/>
</dbReference>
<dbReference type="GO" id="GO:0005737">
    <property type="term" value="C:cytoplasm"/>
    <property type="evidence" value="ECO:0007669"/>
    <property type="project" value="UniProtKB-SubCell"/>
</dbReference>
<dbReference type="GO" id="GO:0005524">
    <property type="term" value="F:ATP binding"/>
    <property type="evidence" value="ECO:0007669"/>
    <property type="project" value="UniProtKB-KW"/>
</dbReference>
<dbReference type="GO" id="GO:0004635">
    <property type="term" value="F:phosphoribosyl-AMP cyclohydrolase activity"/>
    <property type="evidence" value="ECO:0007669"/>
    <property type="project" value="UniProtKB-UniRule"/>
</dbReference>
<dbReference type="GO" id="GO:0004636">
    <property type="term" value="F:phosphoribosyl-ATP diphosphatase activity"/>
    <property type="evidence" value="ECO:0007669"/>
    <property type="project" value="UniProtKB-UniRule"/>
</dbReference>
<dbReference type="GO" id="GO:0000105">
    <property type="term" value="P:L-histidine biosynthetic process"/>
    <property type="evidence" value="ECO:0007669"/>
    <property type="project" value="UniProtKB-UniRule"/>
</dbReference>
<dbReference type="CDD" id="cd11534">
    <property type="entry name" value="NTP-PPase_HisIE_like"/>
    <property type="match status" value="1"/>
</dbReference>
<dbReference type="FunFam" id="1.10.287.1080:FF:000002">
    <property type="entry name" value="Histidine biosynthesis bifunctional protein HisIE"/>
    <property type="match status" value="1"/>
</dbReference>
<dbReference type="FunFam" id="3.10.20.810:FF:000001">
    <property type="entry name" value="Histidine biosynthesis bifunctional protein HisIE"/>
    <property type="match status" value="1"/>
</dbReference>
<dbReference type="Gene3D" id="1.10.287.1080">
    <property type="entry name" value="MazG-like"/>
    <property type="match status" value="1"/>
</dbReference>
<dbReference type="Gene3D" id="3.10.20.810">
    <property type="entry name" value="Phosphoribosyl-AMP cyclohydrolase"/>
    <property type="match status" value="1"/>
</dbReference>
<dbReference type="HAMAP" id="MF_01020">
    <property type="entry name" value="HisE"/>
    <property type="match status" value="1"/>
</dbReference>
<dbReference type="HAMAP" id="MF_01021">
    <property type="entry name" value="HisI"/>
    <property type="match status" value="1"/>
</dbReference>
<dbReference type="HAMAP" id="MF_01019">
    <property type="entry name" value="HisIE"/>
    <property type="match status" value="1"/>
</dbReference>
<dbReference type="InterPro" id="IPR023019">
    <property type="entry name" value="His_synth_HisIE"/>
</dbReference>
<dbReference type="InterPro" id="IPR008179">
    <property type="entry name" value="HisE"/>
</dbReference>
<dbReference type="InterPro" id="IPR026660">
    <property type="entry name" value="PRA-CH"/>
</dbReference>
<dbReference type="InterPro" id="IPR021130">
    <property type="entry name" value="PRib-ATP_PPHydrolase-like"/>
</dbReference>
<dbReference type="InterPro" id="IPR002496">
    <property type="entry name" value="PRib_AMP_CycHydrolase_dom"/>
</dbReference>
<dbReference type="InterPro" id="IPR038019">
    <property type="entry name" value="PRib_AMP_CycHydrolase_sf"/>
</dbReference>
<dbReference type="NCBIfam" id="TIGR03188">
    <property type="entry name" value="histidine_hisI"/>
    <property type="match status" value="1"/>
</dbReference>
<dbReference type="NCBIfam" id="NF000768">
    <property type="entry name" value="PRK00051.1"/>
    <property type="match status" value="1"/>
</dbReference>
<dbReference type="NCBIfam" id="NF002747">
    <property type="entry name" value="PRK02759.1"/>
    <property type="match status" value="1"/>
</dbReference>
<dbReference type="PANTHER" id="PTHR42945">
    <property type="entry name" value="HISTIDINE BIOSYNTHESIS BIFUNCTIONAL PROTEIN"/>
    <property type="match status" value="1"/>
</dbReference>
<dbReference type="PANTHER" id="PTHR42945:SF9">
    <property type="entry name" value="HISTIDINE BIOSYNTHESIS BIFUNCTIONAL PROTEIN HISIE"/>
    <property type="match status" value="1"/>
</dbReference>
<dbReference type="Pfam" id="PF01502">
    <property type="entry name" value="PRA-CH"/>
    <property type="match status" value="1"/>
</dbReference>
<dbReference type="Pfam" id="PF01503">
    <property type="entry name" value="PRA-PH"/>
    <property type="match status" value="1"/>
</dbReference>
<dbReference type="SUPFAM" id="SSF101386">
    <property type="entry name" value="all-alpha NTP pyrophosphatases"/>
    <property type="match status" value="1"/>
</dbReference>
<dbReference type="SUPFAM" id="SSF141734">
    <property type="entry name" value="HisI-like"/>
    <property type="match status" value="1"/>
</dbReference>
<sequence length="209" mass="23901">MKQADELRFNEDGLIPAIVQDAASKEVLTLAYMNKESYEKTLETKETWFYSRSRQALWHKGETSGNTQAVKGIRYDCDQDALLVLVEPSGPACHTGSYSCFTKEQTEEQAADRFGIMNELERVIAERQAEMPEGAYTTYLFREGVDKILKKVGEEASEVIIAAKNRDHEELKWEAADLLYHLLVLLREQSLPLDDVLDVLKKRHSEIEE</sequence>
<organism>
    <name type="scientific">Bacillus subtilis (strain 168)</name>
    <dbReference type="NCBI Taxonomy" id="224308"/>
    <lineage>
        <taxon>Bacteria</taxon>
        <taxon>Bacillati</taxon>
        <taxon>Bacillota</taxon>
        <taxon>Bacilli</taxon>
        <taxon>Bacillales</taxon>
        <taxon>Bacillaceae</taxon>
        <taxon>Bacillus</taxon>
    </lineage>
</organism>